<sequence>MATLADPRDIILAPVISEKSYGLLDDNVYTFLVRPDSNKTQIKIAVEKIFAVKVASVNTANRQGKRKRTRTGYGKRKSTKRAIVTLAPGSRPIDLFGAPA</sequence>
<evidence type="ECO:0000255" key="1">
    <source>
        <dbReference type="HAMAP-Rule" id="MF_01369"/>
    </source>
</evidence>
<evidence type="ECO:0000305" key="2"/>
<reference key="1">
    <citation type="journal article" date="2002" name="J. Bacteriol.">
        <title>Whole-genome comparison of Mycobacterium tuberculosis clinical and laboratory strains.</title>
        <authorList>
            <person name="Fleischmann R.D."/>
            <person name="Alland D."/>
            <person name="Eisen J.A."/>
            <person name="Carpenter L."/>
            <person name="White O."/>
            <person name="Peterson J.D."/>
            <person name="DeBoy R.T."/>
            <person name="Dodson R.J."/>
            <person name="Gwinn M.L."/>
            <person name="Haft D.H."/>
            <person name="Hickey E.K."/>
            <person name="Kolonay J.F."/>
            <person name="Nelson W.C."/>
            <person name="Umayam L.A."/>
            <person name="Ermolaeva M.D."/>
            <person name="Salzberg S.L."/>
            <person name="Delcher A."/>
            <person name="Utterback T.R."/>
            <person name="Weidman J.F."/>
            <person name="Khouri H.M."/>
            <person name="Gill J."/>
            <person name="Mikula A."/>
            <person name="Bishai W."/>
            <person name="Jacobs W.R. Jr."/>
            <person name="Venter J.C."/>
            <person name="Fraser C.M."/>
        </authorList>
    </citation>
    <scope>NUCLEOTIDE SEQUENCE [LARGE SCALE GENOMIC DNA]</scope>
    <source>
        <strain>CDC 1551 / Oshkosh</strain>
    </source>
</reference>
<comment type="function">
    <text evidence="1">One of the early assembly proteins it binds 23S rRNA. One of the proteins that surrounds the polypeptide exit tunnel on the outside of the ribosome. Forms the main docking site for trigger factor binding to the ribosome.</text>
</comment>
<comment type="subunit">
    <text evidence="1">Part of the 50S ribosomal subunit. Contacts protein L29, and trigger factor when it is bound to the ribosome.</text>
</comment>
<comment type="similarity">
    <text evidence="1">Belongs to the universal ribosomal protein uL23 family.</text>
</comment>
<protein>
    <recommendedName>
        <fullName evidence="1">Large ribosomal subunit protein uL23</fullName>
    </recommendedName>
    <alternativeName>
        <fullName evidence="2">50S ribosomal protein L23</fullName>
    </alternativeName>
</protein>
<gene>
    <name evidence="1" type="primary">rplW</name>
    <name type="ordered locus">MT0730</name>
</gene>
<name>RL23_MYCTO</name>
<organism>
    <name type="scientific">Mycobacterium tuberculosis (strain CDC 1551 / Oshkosh)</name>
    <dbReference type="NCBI Taxonomy" id="83331"/>
    <lineage>
        <taxon>Bacteria</taxon>
        <taxon>Bacillati</taxon>
        <taxon>Actinomycetota</taxon>
        <taxon>Actinomycetes</taxon>
        <taxon>Mycobacteriales</taxon>
        <taxon>Mycobacteriaceae</taxon>
        <taxon>Mycobacterium</taxon>
        <taxon>Mycobacterium tuberculosis complex</taxon>
    </lineage>
</organism>
<dbReference type="EMBL" id="AE000516">
    <property type="protein sequence ID" value="AAK44961.1"/>
    <property type="molecule type" value="Genomic_DNA"/>
</dbReference>
<dbReference type="PIR" id="B70642">
    <property type="entry name" value="B70642"/>
</dbReference>
<dbReference type="RefSeq" id="WP_003403581.1">
    <property type="nucleotide sequence ID" value="NZ_KK341227.1"/>
</dbReference>
<dbReference type="SMR" id="P9WHB8"/>
<dbReference type="KEGG" id="mtc:MT0730"/>
<dbReference type="PATRIC" id="fig|83331.31.peg.780"/>
<dbReference type="HOGENOM" id="CLU_037562_3_2_11"/>
<dbReference type="Proteomes" id="UP000001020">
    <property type="component" value="Chromosome"/>
</dbReference>
<dbReference type="GO" id="GO:1990904">
    <property type="term" value="C:ribonucleoprotein complex"/>
    <property type="evidence" value="ECO:0007669"/>
    <property type="project" value="UniProtKB-KW"/>
</dbReference>
<dbReference type="GO" id="GO:0005840">
    <property type="term" value="C:ribosome"/>
    <property type="evidence" value="ECO:0007669"/>
    <property type="project" value="UniProtKB-KW"/>
</dbReference>
<dbReference type="GO" id="GO:0019843">
    <property type="term" value="F:rRNA binding"/>
    <property type="evidence" value="ECO:0007669"/>
    <property type="project" value="UniProtKB-UniRule"/>
</dbReference>
<dbReference type="GO" id="GO:0003735">
    <property type="term" value="F:structural constituent of ribosome"/>
    <property type="evidence" value="ECO:0007669"/>
    <property type="project" value="InterPro"/>
</dbReference>
<dbReference type="GO" id="GO:0006412">
    <property type="term" value="P:translation"/>
    <property type="evidence" value="ECO:0007669"/>
    <property type="project" value="UniProtKB-UniRule"/>
</dbReference>
<dbReference type="FunFam" id="3.30.70.330:FF:000001">
    <property type="entry name" value="50S ribosomal protein L23"/>
    <property type="match status" value="1"/>
</dbReference>
<dbReference type="Gene3D" id="3.30.70.330">
    <property type="match status" value="1"/>
</dbReference>
<dbReference type="HAMAP" id="MF_01369_B">
    <property type="entry name" value="Ribosomal_uL23_B"/>
    <property type="match status" value="1"/>
</dbReference>
<dbReference type="InterPro" id="IPR012677">
    <property type="entry name" value="Nucleotide-bd_a/b_plait_sf"/>
</dbReference>
<dbReference type="InterPro" id="IPR013025">
    <property type="entry name" value="Ribosomal_uL23-like"/>
</dbReference>
<dbReference type="InterPro" id="IPR012678">
    <property type="entry name" value="Ribosomal_uL23/eL15/eS24_sf"/>
</dbReference>
<dbReference type="InterPro" id="IPR001014">
    <property type="entry name" value="Ribosomal_uL23_CS"/>
</dbReference>
<dbReference type="NCBIfam" id="NF004363">
    <property type="entry name" value="PRK05738.2-4"/>
    <property type="match status" value="1"/>
</dbReference>
<dbReference type="NCBIfam" id="NF004364">
    <property type="entry name" value="PRK05738.2-5"/>
    <property type="match status" value="1"/>
</dbReference>
<dbReference type="PANTHER" id="PTHR11620">
    <property type="entry name" value="60S RIBOSOMAL PROTEIN L23A"/>
    <property type="match status" value="1"/>
</dbReference>
<dbReference type="Pfam" id="PF00276">
    <property type="entry name" value="Ribosomal_L23"/>
    <property type="match status" value="1"/>
</dbReference>
<dbReference type="SUPFAM" id="SSF54189">
    <property type="entry name" value="Ribosomal proteins S24e, L23 and L15e"/>
    <property type="match status" value="1"/>
</dbReference>
<dbReference type="PROSITE" id="PS00050">
    <property type="entry name" value="RIBOSOMAL_L23"/>
    <property type="match status" value="1"/>
</dbReference>
<proteinExistence type="inferred from homology"/>
<feature type="chain" id="PRO_0000428214" description="Large ribosomal subunit protein uL23">
    <location>
        <begin position="1"/>
        <end position="100"/>
    </location>
</feature>
<accession>P9WHB8</accession>
<accession>L0T7G7</accession>
<accession>P95051</accession>
<keyword id="KW-1185">Reference proteome</keyword>
<keyword id="KW-0687">Ribonucleoprotein</keyword>
<keyword id="KW-0689">Ribosomal protein</keyword>
<keyword id="KW-0694">RNA-binding</keyword>
<keyword id="KW-0699">rRNA-binding</keyword>